<organism>
    <name type="scientific">Sus scrofa</name>
    <name type="common">Pig</name>
    <dbReference type="NCBI Taxonomy" id="9823"/>
    <lineage>
        <taxon>Eukaryota</taxon>
        <taxon>Metazoa</taxon>
        <taxon>Chordata</taxon>
        <taxon>Craniata</taxon>
        <taxon>Vertebrata</taxon>
        <taxon>Euteleostomi</taxon>
        <taxon>Mammalia</taxon>
        <taxon>Eutheria</taxon>
        <taxon>Laurasiatheria</taxon>
        <taxon>Artiodactyla</taxon>
        <taxon>Suina</taxon>
        <taxon>Suidae</taxon>
        <taxon>Sus</taxon>
    </lineage>
</organism>
<gene>
    <name type="primary">SRPK3</name>
    <name type="synonym">MSSK1</name>
    <name type="synonym">STK23</name>
</gene>
<evidence type="ECO:0000250" key="1">
    <source>
        <dbReference type="UniProtKB" id="Q9UPE1"/>
    </source>
</evidence>
<evidence type="ECO:0000250" key="2">
    <source>
        <dbReference type="UniProtKB" id="Q9Z0G2"/>
    </source>
</evidence>
<evidence type="ECO:0000255" key="3">
    <source>
        <dbReference type="PROSITE-ProRule" id="PRU00159"/>
    </source>
</evidence>
<evidence type="ECO:0000255" key="4">
    <source>
        <dbReference type="PROSITE-ProRule" id="PRU10027"/>
    </source>
</evidence>
<evidence type="ECO:0000256" key="5">
    <source>
        <dbReference type="SAM" id="MobiDB-lite"/>
    </source>
</evidence>
<evidence type="ECO:0000269" key="6">
    <source>
    </source>
</evidence>
<evidence type="ECO:0000305" key="7"/>
<name>SRPK3_PIG</name>
<keyword id="KW-0067">ATP-binding</keyword>
<keyword id="KW-0963">Cytoplasm</keyword>
<keyword id="KW-0217">Developmental protein</keyword>
<keyword id="KW-0221">Differentiation</keyword>
<keyword id="KW-0418">Kinase</keyword>
<keyword id="KW-0517">Myogenesis</keyword>
<keyword id="KW-0547">Nucleotide-binding</keyword>
<keyword id="KW-0539">Nucleus</keyword>
<keyword id="KW-0597">Phosphoprotein</keyword>
<keyword id="KW-1185">Reference proteome</keyword>
<keyword id="KW-0723">Serine/threonine-protein kinase</keyword>
<keyword id="KW-0808">Transferase</keyword>
<proteinExistence type="evidence at transcript level"/>
<dbReference type="EC" id="2.7.11.1"/>
<dbReference type="EMBL" id="FJ477853">
    <property type="protein sequence ID" value="ACK77781.1"/>
    <property type="molecule type" value="mRNA"/>
</dbReference>
<dbReference type="EMBL" id="GQ428209">
    <property type="protein sequence ID" value="ACU57054.1"/>
    <property type="molecule type" value="mRNA"/>
</dbReference>
<dbReference type="EMBL" id="GQ450279">
    <property type="protein sequence ID" value="ACV85727.1"/>
    <property type="molecule type" value="Genomic_DNA"/>
</dbReference>
<dbReference type="RefSeq" id="NP_001137591.1">
    <property type="nucleotide sequence ID" value="NM_001144119.1"/>
</dbReference>
<dbReference type="SMR" id="B8Y466"/>
<dbReference type="FunCoup" id="B8Y466">
    <property type="interactions" value="155"/>
</dbReference>
<dbReference type="STRING" id="9823.ENSSSCP00000067424"/>
<dbReference type="GlyGen" id="B8Y466">
    <property type="glycosylation" value="1 site"/>
</dbReference>
<dbReference type="PaxDb" id="9823-ENSSSCP00000021611"/>
<dbReference type="GeneID" id="100240720"/>
<dbReference type="KEGG" id="ssc:100240720"/>
<dbReference type="CTD" id="26576"/>
<dbReference type="eggNOG" id="KOG1290">
    <property type="taxonomic scope" value="Eukaryota"/>
</dbReference>
<dbReference type="InParanoid" id="B8Y466"/>
<dbReference type="OrthoDB" id="2649at2759"/>
<dbReference type="Proteomes" id="UP000008227">
    <property type="component" value="Unplaced"/>
</dbReference>
<dbReference type="Proteomes" id="UP000314985">
    <property type="component" value="Unplaced"/>
</dbReference>
<dbReference type="Proteomes" id="UP000694570">
    <property type="component" value="Unplaced"/>
</dbReference>
<dbReference type="Proteomes" id="UP000694571">
    <property type="component" value="Unplaced"/>
</dbReference>
<dbReference type="Proteomes" id="UP000694720">
    <property type="component" value="Unplaced"/>
</dbReference>
<dbReference type="Proteomes" id="UP000694722">
    <property type="component" value="Unplaced"/>
</dbReference>
<dbReference type="Proteomes" id="UP000694723">
    <property type="component" value="Unplaced"/>
</dbReference>
<dbReference type="Proteomes" id="UP000694724">
    <property type="component" value="Unplaced"/>
</dbReference>
<dbReference type="Proteomes" id="UP000694725">
    <property type="component" value="Unplaced"/>
</dbReference>
<dbReference type="Proteomes" id="UP000694726">
    <property type="component" value="Unplaced"/>
</dbReference>
<dbReference type="Proteomes" id="UP000694727">
    <property type="component" value="Unplaced"/>
</dbReference>
<dbReference type="Proteomes" id="UP000694728">
    <property type="component" value="Unplaced"/>
</dbReference>
<dbReference type="GO" id="GO:0005737">
    <property type="term" value="C:cytoplasm"/>
    <property type="evidence" value="ECO:0000250"/>
    <property type="project" value="UniProtKB"/>
</dbReference>
<dbReference type="GO" id="GO:0005634">
    <property type="term" value="C:nucleus"/>
    <property type="evidence" value="ECO:0000250"/>
    <property type="project" value="UniProtKB"/>
</dbReference>
<dbReference type="GO" id="GO:0005524">
    <property type="term" value="F:ATP binding"/>
    <property type="evidence" value="ECO:0007669"/>
    <property type="project" value="UniProtKB-KW"/>
</dbReference>
<dbReference type="GO" id="GO:0106310">
    <property type="term" value="F:protein serine kinase activity"/>
    <property type="evidence" value="ECO:0007669"/>
    <property type="project" value="RHEA"/>
</dbReference>
<dbReference type="GO" id="GO:0004674">
    <property type="term" value="F:protein serine/threonine kinase activity"/>
    <property type="evidence" value="ECO:0000318"/>
    <property type="project" value="GO_Central"/>
</dbReference>
<dbReference type="GO" id="GO:0030154">
    <property type="term" value="P:cell differentiation"/>
    <property type="evidence" value="ECO:0007669"/>
    <property type="project" value="UniProtKB-KW"/>
</dbReference>
<dbReference type="GO" id="GO:0035556">
    <property type="term" value="P:intracellular signal transduction"/>
    <property type="evidence" value="ECO:0000318"/>
    <property type="project" value="GO_Central"/>
</dbReference>
<dbReference type="GO" id="GO:0007517">
    <property type="term" value="P:muscle organ development"/>
    <property type="evidence" value="ECO:0007669"/>
    <property type="project" value="UniProtKB-KW"/>
</dbReference>
<dbReference type="GO" id="GO:0060537">
    <property type="term" value="P:muscle tissue development"/>
    <property type="evidence" value="ECO:0000250"/>
    <property type="project" value="UniProtKB"/>
</dbReference>
<dbReference type="GO" id="GO:0050684">
    <property type="term" value="P:regulation of mRNA processing"/>
    <property type="evidence" value="ECO:0000318"/>
    <property type="project" value="GO_Central"/>
</dbReference>
<dbReference type="GO" id="GO:0000245">
    <property type="term" value="P:spliceosomal complex assembly"/>
    <property type="evidence" value="ECO:0000318"/>
    <property type="project" value="GO_Central"/>
</dbReference>
<dbReference type="CDD" id="cd14218">
    <property type="entry name" value="STKc_SRPK3"/>
    <property type="match status" value="1"/>
</dbReference>
<dbReference type="FunFam" id="1.10.510.10:FF:001095">
    <property type="entry name" value="SRPK3 isoform 3"/>
    <property type="match status" value="1"/>
</dbReference>
<dbReference type="FunFam" id="1.10.510.10:FF:000105">
    <property type="entry name" value="SRSF protein kinase 2"/>
    <property type="match status" value="1"/>
</dbReference>
<dbReference type="FunFam" id="3.30.200.20:FF:000163">
    <property type="entry name" value="SRSF protein kinase 2 isoform X1"/>
    <property type="match status" value="1"/>
</dbReference>
<dbReference type="Gene3D" id="3.30.200.20">
    <property type="entry name" value="Phosphorylase Kinase, domain 1"/>
    <property type="match status" value="1"/>
</dbReference>
<dbReference type="Gene3D" id="1.10.510.10">
    <property type="entry name" value="Transferase(Phosphotransferase) domain 1"/>
    <property type="match status" value="2"/>
</dbReference>
<dbReference type="InterPro" id="IPR011009">
    <property type="entry name" value="Kinase-like_dom_sf"/>
</dbReference>
<dbReference type="InterPro" id="IPR000719">
    <property type="entry name" value="Prot_kinase_dom"/>
</dbReference>
<dbReference type="InterPro" id="IPR017441">
    <property type="entry name" value="Protein_kinase_ATP_BS"/>
</dbReference>
<dbReference type="InterPro" id="IPR008271">
    <property type="entry name" value="Ser/Thr_kinase_AS"/>
</dbReference>
<dbReference type="InterPro" id="IPR051334">
    <property type="entry name" value="SRPK"/>
</dbReference>
<dbReference type="PANTHER" id="PTHR47634">
    <property type="entry name" value="PROTEIN KINASE DOMAIN-CONTAINING PROTEIN-RELATED"/>
    <property type="match status" value="1"/>
</dbReference>
<dbReference type="PANTHER" id="PTHR47634:SF20">
    <property type="entry name" value="SRSF PROTEIN KINASE 3"/>
    <property type="match status" value="1"/>
</dbReference>
<dbReference type="Pfam" id="PF00069">
    <property type="entry name" value="Pkinase"/>
    <property type="match status" value="2"/>
</dbReference>
<dbReference type="SMART" id="SM00220">
    <property type="entry name" value="S_TKc"/>
    <property type="match status" value="1"/>
</dbReference>
<dbReference type="SUPFAM" id="SSF56112">
    <property type="entry name" value="Protein kinase-like (PK-like)"/>
    <property type="match status" value="1"/>
</dbReference>
<dbReference type="PROSITE" id="PS00107">
    <property type="entry name" value="PROTEIN_KINASE_ATP"/>
    <property type="match status" value="1"/>
</dbReference>
<dbReference type="PROSITE" id="PS50011">
    <property type="entry name" value="PROTEIN_KINASE_DOM"/>
    <property type="match status" value="1"/>
</dbReference>
<dbReference type="PROSITE" id="PS00108">
    <property type="entry name" value="PROTEIN_KINASE_ST"/>
    <property type="match status" value="1"/>
</dbReference>
<reference key="1">
    <citation type="journal article" date="2011" name="Mol. Biol. Rep.">
        <title>Molecular characterization and expression patterns of serine/arginine-rich specific kinase 3 (SPRK3) in porcine skeletal muscle.</title>
        <authorList>
            <person name="Xu Y."/>
            <person name="Yu W."/>
            <person name="Xiong Y."/>
            <person name="Xie H."/>
            <person name="Ren Z."/>
            <person name="Xu D."/>
            <person name="Lei M."/>
            <person name="Zuo B."/>
            <person name="Feng X."/>
        </authorList>
    </citation>
    <scope>NUCLEOTIDE SEQUENCE [GENOMIC DNA / MRNA]</scope>
    <scope>TISSUE SPECIFICITY</scope>
    <source>
        <strain>Landrace</strain>
        <tissue>Muscle</tissue>
    </source>
</reference>
<protein>
    <recommendedName>
        <fullName>SRSF protein kinase 3</fullName>
        <ecNumber>2.7.11.1</ecNumber>
    </recommendedName>
    <alternativeName>
        <fullName>Muscle-specific serine kinase 1</fullName>
        <shortName>MSSK-1</shortName>
    </alternativeName>
    <alternativeName>
        <fullName>Serine/arginine-rich protein-specific kinase 3</fullName>
        <shortName>SR-protein-specific kinase 3</shortName>
    </alternativeName>
    <alternativeName>
        <fullName>Serine/threonine-protein kinase 23</fullName>
    </alternativeName>
</protein>
<accession>B8Y466</accession>
<comment type="function">
    <text evidence="2">Serine/arginine-rich protein-specific kinase which specifically phosphorylates its substrates at serine residues located in regions rich in arginine/serine dipeptides, known as RS domains. Phosphorylates the SR splicing factor SRSF1 and the lamin-B receptor (LBR) in vitro. Required for normal muscle development (By similarity).</text>
</comment>
<comment type="catalytic activity">
    <reaction>
        <text>L-seryl-[protein] + ATP = O-phospho-L-seryl-[protein] + ADP + H(+)</text>
        <dbReference type="Rhea" id="RHEA:17989"/>
        <dbReference type="Rhea" id="RHEA-COMP:9863"/>
        <dbReference type="Rhea" id="RHEA-COMP:11604"/>
        <dbReference type="ChEBI" id="CHEBI:15378"/>
        <dbReference type="ChEBI" id="CHEBI:29999"/>
        <dbReference type="ChEBI" id="CHEBI:30616"/>
        <dbReference type="ChEBI" id="CHEBI:83421"/>
        <dbReference type="ChEBI" id="CHEBI:456216"/>
        <dbReference type="EC" id="2.7.11.1"/>
    </reaction>
</comment>
<comment type="catalytic activity">
    <reaction>
        <text>L-threonyl-[protein] + ATP = O-phospho-L-threonyl-[protein] + ADP + H(+)</text>
        <dbReference type="Rhea" id="RHEA:46608"/>
        <dbReference type="Rhea" id="RHEA-COMP:11060"/>
        <dbReference type="Rhea" id="RHEA-COMP:11605"/>
        <dbReference type="ChEBI" id="CHEBI:15378"/>
        <dbReference type="ChEBI" id="CHEBI:30013"/>
        <dbReference type="ChEBI" id="CHEBI:30616"/>
        <dbReference type="ChEBI" id="CHEBI:61977"/>
        <dbReference type="ChEBI" id="CHEBI:456216"/>
        <dbReference type="EC" id="2.7.11.1"/>
    </reaction>
</comment>
<comment type="subcellular location">
    <subcellularLocation>
        <location evidence="1">Nucleus</location>
    </subcellularLocation>
    <subcellularLocation>
        <location evidence="1">Cytoplasm</location>
    </subcellularLocation>
</comment>
<comment type="tissue specificity">
    <text evidence="6">Highly expressed in skeletal muscle, heart, uterus and parorchis. Weakly expressed in brain, stomach, small intestine and ovary.</text>
</comment>
<comment type="similarity">
    <text evidence="7">Belongs to the protein kinase superfamily.</text>
</comment>
<sequence>MSASTGGGGGGDSGSSSSSSSQASCGPEPSGSELAPPTPAPRMLQGLLGSDDEEQEDPKDYCKGGYYPVKIGDLFNGRYHVVRKLGWGHFSTVWLCWDIQRKRFVALKVVKSAGHYTETAVDEIKLLKCVRDSDPSDPKRETIVQLIDDFRISGVNGVHVCMVLEVLGHQLLKWIIKSNYQGLPVPCVKSIVRQVLHGLDYLHTKCKIIHTDIKPENILLCVGDAYIRRLAAEATEWQQSGAPPPSRSTVSTAPQEVLSGKLSKNKRKKMRRKRKQQKRLLEERLRDLQRLEAMEAAAQAEDSGSRLEGGSGSTSSSGCHPGGAGPGPSPASSSPAPGGDRSLSPGSQTSGFSGSLFSPASCSILSGSSNQRETGGLLSPSTPFGASNLLVNPLEPQNADKIRIKIADLGNACWVHKHFTEGIQTRQYRAVEVLIGAEYGPPADIWSTACMAFELATGDYLFEPHSGEDYSRDEDHIAHIVELLGDIPPAFALSGRYSREFFNRRGELRHIHNLKHWGLYEVLMEKYEWPLEQATQFSAFLLPMMEYIPEKRASAADCLQHPWLNP</sequence>
<feature type="chain" id="PRO_0000406987" description="SRSF protein kinase 3">
    <location>
        <begin position="1"/>
        <end position="566"/>
    </location>
</feature>
<feature type="domain" description="Protein kinase" evidence="3">
    <location>
        <begin position="79"/>
        <end position="564"/>
    </location>
</feature>
<feature type="region of interest" description="Disordered" evidence="5">
    <location>
        <begin position="1"/>
        <end position="60"/>
    </location>
</feature>
<feature type="region of interest" description="Disordered" evidence="5">
    <location>
        <begin position="236"/>
        <end position="283"/>
    </location>
</feature>
<feature type="region of interest" description="Disordered" evidence="5">
    <location>
        <begin position="295"/>
        <end position="353"/>
    </location>
</feature>
<feature type="compositionally biased region" description="Gly residues" evidence="5">
    <location>
        <begin position="1"/>
        <end position="13"/>
    </location>
</feature>
<feature type="compositionally biased region" description="Low complexity" evidence="5">
    <location>
        <begin position="14"/>
        <end position="26"/>
    </location>
</feature>
<feature type="compositionally biased region" description="Polar residues" evidence="5">
    <location>
        <begin position="236"/>
        <end position="254"/>
    </location>
</feature>
<feature type="compositionally biased region" description="Basic residues" evidence="5">
    <location>
        <begin position="263"/>
        <end position="278"/>
    </location>
</feature>
<feature type="compositionally biased region" description="Low complexity" evidence="5">
    <location>
        <begin position="330"/>
        <end position="339"/>
    </location>
</feature>
<feature type="compositionally biased region" description="Polar residues" evidence="5">
    <location>
        <begin position="344"/>
        <end position="353"/>
    </location>
</feature>
<feature type="active site" description="Proton acceptor" evidence="3 4">
    <location>
        <position position="212"/>
    </location>
</feature>
<feature type="binding site" evidence="3">
    <location>
        <begin position="85"/>
        <end position="93"/>
    </location>
    <ligand>
        <name>ATP</name>
        <dbReference type="ChEBI" id="CHEBI:30616"/>
    </ligand>
</feature>
<feature type="binding site" evidence="3">
    <location>
        <position position="108"/>
    </location>
    <ligand>
        <name>ATP</name>
        <dbReference type="ChEBI" id="CHEBI:30616"/>
    </ligand>
</feature>
<feature type="modified residue" description="Phosphoserine" evidence="2">
    <location>
        <position position="50"/>
    </location>
</feature>
<feature type="modified residue" description="Phosphoserine" evidence="2">
    <location>
        <position position="329"/>
    </location>
</feature>